<name>HISZ_POLAQ</name>
<sequence length="387" mass="41984">MNRWLLPEDIADVLPAQARKVETLRRAILDLYQSYGYELVAPPILEFLDSLLTGTGSDLNLQTFKLVDQLSGRTLGLRADITPQVARIDAHLLNRAGVTRLCYAGSVAQALTPVGGSSREQLQLGAEIYGCANGEADFEAITLLLKTLDLAGLKKVYLDLSHAGILTGILEGQQLDKESIETLYGLLQSKDRPRLRQWATCLPAKLAADLLALTELNGPCTEVIANAKKVLPRHAAVDQALADLECVVSAASKSLSGVELSIDLADLRGYQYHSGVMFAAYVDGLPQPIARGGRYDQVGKAFGRSRPATGFSLDLLTLAGLSPLNCRKLAVLAPWIDDADLNQVIADLRNRGEVVIQVLPGEVLEAAEYECDRELVKQGNSWELKKK</sequence>
<feature type="chain" id="PRO_1000076249" description="ATP phosphoribosyltransferase regulatory subunit">
    <location>
        <begin position="1"/>
        <end position="387"/>
    </location>
</feature>
<gene>
    <name evidence="1" type="primary">hisZ</name>
    <name type="ordered locus">Pnuc_1282</name>
</gene>
<organism>
    <name type="scientific">Polynucleobacter asymbioticus (strain DSM 18221 / CIP 109841 / QLW-P1DMWA-1)</name>
    <name type="common">Polynucleobacter necessarius subsp. asymbioticus</name>
    <dbReference type="NCBI Taxonomy" id="312153"/>
    <lineage>
        <taxon>Bacteria</taxon>
        <taxon>Pseudomonadati</taxon>
        <taxon>Pseudomonadota</taxon>
        <taxon>Betaproteobacteria</taxon>
        <taxon>Burkholderiales</taxon>
        <taxon>Burkholderiaceae</taxon>
        <taxon>Polynucleobacter</taxon>
    </lineage>
</organism>
<dbReference type="EMBL" id="CP000655">
    <property type="protein sequence ID" value="ABP34496.1"/>
    <property type="molecule type" value="Genomic_DNA"/>
</dbReference>
<dbReference type="RefSeq" id="WP_011903121.1">
    <property type="nucleotide sequence ID" value="NC_009379.1"/>
</dbReference>
<dbReference type="SMR" id="A4SYD2"/>
<dbReference type="GeneID" id="31481670"/>
<dbReference type="KEGG" id="pnu:Pnuc_1282"/>
<dbReference type="eggNOG" id="COG3705">
    <property type="taxonomic scope" value="Bacteria"/>
</dbReference>
<dbReference type="HOGENOM" id="CLU_025113_0_1_4"/>
<dbReference type="UniPathway" id="UPA00031">
    <property type="reaction ID" value="UER00006"/>
</dbReference>
<dbReference type="Proteomes" id="UP000000231">
    <property type="component" value="Chromosome"/>
</dbReference>
<dbReference type="GO" id="GO:0005737">
    <property type="term" value="C:cytoplasm"/>
    <property type="evidence" value="ECO:0007669"/>
    <property type="project" value="UniProtKB-SubCell"/>
</dbReference>
<dbReference type="GO" id="GO:0000105">
    <property type="term" value="P:L-histidine biosynthetic process"/>
    <property type="evidence" value="ECO:0007669"/>
    <property type="project" value="UniProtKB-UniRule"/>
</dbReference>
<dbReference type="CDD" id="cd00773">
    <property type="entry name" value="HisRS-like_core"/>
    <property type="match status" value="1"/>
</dbReference>
<dbReference type="Gene3D" id="3.30.930.10">
    <property type="entry name" value="Bira Bifunctional Protein, Domain 2"/>
    <property type="match status" value="1"/>
</dbReference>
<dbReference type="HAMAP" id="MF_00125">
    <property type="entry name" value="HisZ"/>
    <property type="match status" value="1"/>
</dbReference>
<dbReference type="InterPro" id="IPR045864">
    <property type="entry name" value="aa-tRNA-synth_II/BPL/LPL"/>
</dbReference>
<dbReference type="InterPro" id="IPR041715">
    <property type="entry name" value="HisRS-like_core"/>
</dbReference>
<dbReference type="InterPro" id="IPR004517">
    <property type="entry name" value="HisZ"/>
</dbReference>
<dbReference type="NCBIfam" id="TIGR00443">
    <property type="entry name" value="hisZ_biosyn_reg"/>
    <property type="match status" value="1"/>
</dbReference>
<dbReference type="NCBIfam" id="NF008935">
    <property type="entry name" value="PRK12292.1-1"/>
    <property type="match status" value="1"/>
</dbReference>
<dbReference type="NCBIfam" id="NF009086">
    <property type="entry name" value="PRK12421.1"/>
    <property type="match status" value="1"/>
</dbReference>
<dbReference type="PANTHER" id="PTHR11476:SF7">
    <property type="entry name" value="HISTIDINE--TRNA LIGASE"/>
    <property type="match status" value="1"/>
</dbReference>
<dbReference type="PANTHER" id="PTHR11476">
    <property type="entry name" value="HISTIDYL-TRNA SYNTHETASE"/>
    <property type="match status" value="1"/>
</dbReference>
<dbReference type="Pfam" id="PF13393">
    <property type="entry name" value="tRNA-synt_His"/>
    <property type="match status" value="1"/>
</dbReference>
<dbReference type="SUPFAM" id="SSF55681">
    <property type="entry name" value="Class II aaRS and biotin synthetases"/>
    <property type="match status" value="1"/>
</dbReference>
<reference key="1">
    <citation type="journal article" date="2012" name="Stand. Genomic Sci.">
        <title>Complete genome sequence of Polynucleobacter necessarius subsp. asymbioticus type strain (QLW-P1DMWA-1(T)).</title>
        <authorList>
            <person name="Meincke L."/>
            <person name="Copeland A."/>
            <person name="Lapidus A."/>
            <person name="Lucas S."/>
            <person name="Berry K.W."/>
            <person name="Del Rio T.G."/>
            <person name="Hammon N."/>
            <person name="Dalin E."/>
            <person name="Tice H."/>
            <person name="Pitluck S."/>
            <person name="Richardson P."/>
            <person name="Bruce D."/>
            <person name="Goodwin L."/>
            <person name="Han C."/>
            <person name="Tapia R."/>
            <person name="Detter J.C."/>
            <person name="Schmutz J."/>
            <person name="Brettin T."/>
            <person name="Larimer F."/>
            <person name="Land M."/>
            <person name="Hauser L."/>
            <person name="Kyrpides N.C."/>
            <person name="Ivanova N."/>
            <person name="Goker M."/>
            <person name="Woyke T."/>
            <person name="Wu Q.L."/>
            <person name="Pockl M."/>
            <person name="Hahn M.W."/>
            <person name="Klenk H.P."/>
        </authorList>
    </citation>
    <scope>NUCLEOTIDE SEQUENCE [LARGE SCALE GENOMIC DNA]</scope>
    <source>
        <strain>DSM 18221 / CIP 109841 / QLW-P1DMWA-1</strain>
    </source>
</reference>
<protein>
    <recommendedName>
        <fullName evidence="1">ATP phosphoribosyltransferase regulatory subunit</fullName>
    </recommendedName>
</protein>
<comment type="function">
    <text evidence="1">Required for the first step of histidine biosynthesis. May allow the feedback regulation of ATP phosphoribosyltransferase activity by histidine.</text>
</comment>
<comment type="pathway">
    <text evidence="1">Amino-acid biosynthesis; L-histidine biosynthesis; L-histidine from 5-phospho-alpha-D-ribose 1-diphosphate: step 1/9.</text>
</comment>
<comment type="subunit">
    <text evidence="1">Heteromultimer composed of HisG and HisZ subunits.</text>
</comment>
<comment type="subcellular location">
    <subcellularLocation>
        <location evidence="1">Cytoplasm</location>
    </subcellularLocation>
</comment>
<comment type="miscellaneous">
    <text>This function is generally fulfilled by the C-terminal part of HisG, which is missing in some bacteria such as this one.</text>
</comment>
<comment type="similarity">
    <text evidence="1">Belongs to the class-II aminoacyl-tRNA synthetase family. HisZ subfamily.</text>
</comment>
<proteinExistence type="inferred from homology"/>
<keyword id="KW-0028">Amino-acid biosynthesis</keyword>
<keyword id="KW-0963">Cytoplasm</keyword>
<keyword id="KW-0368">Histidine biosynthesis</keyword>
<keyword id="KW-1185">Reference proteome</keyword>
<evidence type="ECO:0000255" key="1">
    <source>
        <dbReference type="HAMAP-Rule" id="MF_00125"/>
    </source>
</evidence>
<accession>A4SYD2</accession>